<comment type="function">
    <text evidence="1">Key component of the cytosolic iron-sulfur protein assembly (CIA) complex, a multiprotein complex that mediates the incorporation of iron-sulfur cluster into apoproteins specifically involved in DNA metabolism and genomic integrity. In the CIA complex, MMS19 acts as an adapter between early-acting CIA components and a subset of cellular target iron-sulfur proteins (By similarity).</text>
</comment>
<comment type="subunit">
    <text evidence="1">Component of the CIA complex.</text>
</comment>
<comment type="subcellular location">
    <subcellularLocation>
        <location evidence="1">Nucleus</location>
    </subcellularLocation>
    <subcellularLocation>
        <location evidence="1">Cytoplasm</location>
    </subcellularLocation>
</comment>
<comment type="similarity">
    <text evidence="3">Belongs to the MET18/MMS19 family.</text>
</comment>
<proteinExistence type="inferred from homology"/>
<evidence type="ECO:0000250" key="1"/>
<evidence type="ECO:0000256" key="2">
    <source>
        <dbReference type="SAM" id="MobiDB-lite"/>
    </source>
</evidence>
<evidence type="ECO:0000305" key="3"/>
<feature type="chain" id="PRO_0000356170" description="MMS19 nucleotide excision repair protein homolog">
    <location>
        <begin position="1"/>
        <end position="1115"/>
    </location>
</feature>
<feature type="repeat" description="HEAT 1">
    <location>
        <begin position="944"/>
        <end position="986"/>
    </location>
</feature>
<feature type="repeat" description="HEAT 2">
    <location>
        <begin position="990"/>
        <end position="1032"/>
    </location>
</feature>
<feature type="repeat" description="HEAT 3">
    <location>
        <begin position="1035"/>
        <end position="1075"/>
    </location>
</feature>
<feature type="repeat" description="HEAT 4">
    <location>
        <begin position="1078"/>
        <end position="1115"/>
    </location>
</feature>
<feature type="region of interest" description="Disordered" evidence="2">
    <location>
        <begin position="587"/>
        <end position="615"/>
    </location>
</feature>
<feature type="compositionally biased region" description="Low complexity" evidence="2">
    <location>
        <begin position="596"/>
        <end position="613"/>
    </location>
</feature>
<sequence length="1115" mass="127373">MTSNITELNKWIEGYVNPQSEESVKTNAINMVLLYMKSNKIDLQDVVQGLGDYLKSNDSILRARGTLLLSEVLCRLPDLPLNQDQVHFLAMFYCDRLQDYACSSEVVKGITGLITNHTPDYPDNQKLLRNIFSEVHPTSLTQAHRKMVLQVIDIMFNKCLSEIQELKNDFMVGYLQFIDNEKDPRNLIFSFKLLPKVIYNIPEHKHFLESLFEIISCYFPISFNPKGNDPNSITKDDLSNSLLNCFSCTPLLAEHSIPFLIDKICSNLIETKIEALQTLVYCCDRYGGFAVQPFLEEIWSTLRTLILTHKNTTVIEESKKTIFYLTRSFTKERKVLESFLSIMIKECLHHIKSSQDSKIAIYCASILYQSVSASLLSSKIILIHIFPNLFNFLSELQKQDTVQKVNEQNSVIALFNDLLKANSIAFEMYSNENKEPNPLEPFVDQLFKLFSDLLLLNSSSSIRSNSIECLSNLYISKKVHTTEQDDDDSEQITNEFLLDLEKRQFIIKSLVSLLNSSDNTLRHKSLDSLFTIASNEDPSVLNLYVIPTLLQMINHSSCNINTTNNKINNNNNNNNIVIKNNKCQDEHCNEDHSNKNENNNNSNENSNGNSTSGSDDDLKHYLEAFTKLCTHQPLLESVIPQIQVLLQHNIKETYQSNEDFEKSILILQSISFILEKSTNIKSMTICSKSILFPLIKGLYKQELISSSNDNNNNNNNNSNRFNQILTPTLKMIHSIFENISIESQKPLLEKLIKLFLNGDTLVINYQLPTTTTTIIKPFEKSSPYKYLIPIFTTIISQSKLDLSENNELKQSLYQMSLDVNVDDSIAISCSKAYSSIINKQQQQQQQDQINFNFFNDNLLKVINDTTTPLPLKIRHLDLFTWCTKALLTNGNSINIKLGSCLADIISNENVELSYHASKSFGILLSETDVLNEKSGSIIKILFEQKFFTLMFPILLESFKVSKNKELQTISSHYLIAISNLLKHVPKEILLAELNEILPIVMQSLKSSDNNDQVQLLDSSLQTLTMLINETPSSFISYLDSLIPSLIKISTKSTKYNLKRSALEILTLLSKSIPFVNLFPYKTQVVTDIIPCLDDKKRIVRREAQKCRNSWYILQK</sequence>
<dbReference type="EMBL" id="AAFI02000109">
    <property type="protein sequence ID" value="EAL63339.2"/>
    <property type="molecule type" value="Genomic_DNA"/>
</dbReference>
<dbReference type="RefSeq" id="XP_636848.2">
    <property type="nucleotide sequence ID" value="XM_631756.2"/>
</dbReference>
<dbReference type="SMR" id="Q54J88"/>
<dbReference type="FunCoup" id="Q54J88">
    <property type="interactions" value="883"/>
</dbReference>
<dbReference type="STRING" id="44689.Q54J88"/>
<dbReference type="PaxDb" id="44689-DDB0235234"/>
<dbReference type="EnsemblProtists" id="EAL63339">
    <property type="protein sequence ID" value="EAL63339"/>
    <property type="gene ID" value="DDB_G0288217"/>
</dbReference>
<dbReference type="GeneID" id="8626516"/>
<dbReference type="KEGG" id="ddi:DDB_G0288217"/>
<dbReference type="dictyBase" id="DDB_G0288217">
    <property type="gene designation" value="mms19"/>
</dbReference>
<dbReference type="VEuPathDB" id="AmoebaDB:DDB_G0288217"/>
<dbReference type="eggNOG" id="KOG1967">
    <property type="taxonomic scope" value="Eukaryota"/>
</dbReference>
<dbReference type="HOGENOM" id="CLU_005943_0_0_1"/>
<dbReference type="InParanoid" id="Q54J88"/>
<dbReference type="OMA" id="FSFMPEF"/>
<dbReference type="PhylomeDB" id="Q54J88"/>
<dbReference type="PRO" id="PR:Q54J88"/>
<dbReference type="Proteomes" id="UP000002195">
    <property type="component" value="Chromosome 5"/>
</dbReference>
<dbReference type="GO" id="GO:0005737">
    <property type="term" value="C:cytoplasm"/>
    <property type="evidence" value="ECO:0000250"/>
    <property type="project" value="UniProtKB"/>
</dbReference>
<dbReference type="GO" id="GO:0005829">
    <property type="term" value="C:cytosol"/>
    <property type="evidence" value="ECO:0000250"/>
    <property type="project" value="dictyBase"/>
</dbReference>
<dbReference type="GO" id="GO:0097361">
    <property type="term" value="C:cytosolic [4Fe-4S] assembly targeting complex"/>
    <property type="evidence" value="ECO:0000250"/>
    <property type="project" value="UniProtKB"/>
</dbReference>
<dbReference type="GO" id="GO:0005634">
    <property type="term" value="C:nucleus"/>
    <property type="evidence" value="ECO:0000250"/>
    <property type="project" value="dictyBase"/>
</dbReference>
<dbReference type="GO" id="GO:0006281">
    <property type="term" value="P:DNA repair"/>
    <property type="evidence" value="ECO:0007669"/>
    <property type="project" value="UniProtKB-KW"/>
</dbReference>
<dbReference type="GO" id="GO:0051604">
    <property type="term" value="P:protein maturation"/>
    <property type="evidence" value="ECO:0000250"/>
    <property type="project" value="UniProtKB"/>
</dbReference>
<dbReference type="GO" id="GO:0046686">
    <property type="term" value="P:response to cadmium ion"/>
    <property type="evidence" value="ECO:0007007"/>
    <property type="project" value="dictyBase"/>
</dbReference>
<dbReference type="FunFam" id="1.25.10.10:FF:001819">
    <property type="entry name" value="MMS19 nucleotide excision repair protein homolog"/>
    <property type="match status" value="1"/>
</dbReference>
<dbReference type="Gene3D" id="1.25.10.10">
    <property type="entry name" value="Leucine-rich Repeat Variant"/>
    <property type="match status" value="2"/>
</dbReference>
<dbReference type="InterPro" id="IPR011989">
    <property type="entry name" value="ARM-like"/>
</dbReference>
<dbReference type="InterPro" id="IPR016024">
    <property type="entry name" value="ARM-type_fold"/>
</dbReference>
<dbReference type="InterPro" id="IPR039920">
    <property type="entry name" value="MMS19"/>
</dbReference>
<dbReference type="InterPro" id="IPR024687">
    <property type="entry name" value="MMS19_C"/>
</dbReference>
<dbReference type="InterPro" id="IPR029240">
    <property type="entry name" value="MMS19_N"/>
</dbReference>
<dbReference type="PANTHER" id="PTHR12891">
    <property type="entry name" value="DNA REPAIR/TRANSCRIPTION PROTEIN MET18/MMS19"/>
    <property type="match status" value="1"/>
</dbReference>
<dbReference type="PANTHER" id="PTHR12891:SF0">
    <property type="entry name" value="MMS19 NUCLEOTIDE EXCISION REPAIR PROTEIN HOMOLOG"/>
    <property type="match status" value="1"/>
</dbReference>
<dbReference type="Pfam" id="PF12460">
    <property type="entry name" value="MMS19_C"/>
    <property type="match status" value="1"/>
</dbReference>
<dbReference type="Pfam" id="PF14500">
    <property type="entry name" value="MMS19_N"/>
    <property type="match status" value="1"/>
</dbReference>
<dbReference type="SUPFAM" id="SSF48371">
    <property type="entry name" value="ARM repeat"/>
    <property type="match status" value="2"/>
</dbReference>
<keyword id="KW-0963">Cytoplasm</keyword>
<keyword id="KW-0227">DNA damage</keyword>
<keyword id="KW-0234">DNA repair</keyword>
<keyword id="KW-0539">Nucleus</keyword>
<keyword id="KW-1185">Reference proteome</keyword>
<keyword id="KW-0677">Repeat</keyword>
<keyword id="KW-0804">Transcription</keyword>
<reference key="1">
    <citation type="journal article" date="2005" name="Nature">
        <title>The genome of the social amoeba Dictyostelium discoideum.</title>
        <authorList>
            <person name="Eichinger L."/>
            <person name="Pachebat J.A."/>
            <person name="Gloeckner G."/>
            <person name="Rajandream M.A."/>
            <person name="Sucgang R."/>
            <person name="Berriman M."/>
            <person name="Song J."/>
            <person name="Olsen R."/>
            <person name="Szafranski K."/>
            <person name="Xu Q."/>
            <person name="Tunggal B."/>
            <person name="Kummerfeld S."/>
            <person name="Madera M."/>
            <person name="Konfortov B.A."/>
            <person name="Rivero F."/>
            <person name="Bankier A.T."/>
            <person name="Lehmann R."/>
            <person name="Hamlin N."/>
            <person name="Davies R."/>
            <person name="Gaudet P."/>
            <person name="Fey P."/>
            <person name="Pilcher K."/>
            <person name="Chen G."/>
            <person name="Saunders D."/>
            <person name="Sodergren E.J."/>
            <person name="Davis P."/>
            <person name="Kerhornou A."/>
            <person name="Nie X."/>
            <person name="Hall N."/>
            <person name="Anjard C."/>
            <person name="Hemphill L."/>
            <person name="Bason N."/>
            <person name="Farbrother P."/>
            <person name="Desany B."/>
            <person name="Just E."/>
            <person name="Morio T."/>
            <person name="Rost R."/>
            <person name="Churcher C.M."/>
            <person name="Cooper J."/>
            <person name="Haydock S."/>
            <person name="van Driessche N."/>
            <person name="Cronin A."/>
            <person name="Goodhead I."/>
            <person name="Muzny D.M."/>
            <person name="Mourier T."/>
            <person name="Pain A."/>
            <person name="Lu M."/>
            <person name="Harper D."/>
            <person name="Lindsay R."/>
            <person name="Hauser H."/>
            <person name="James K.D."/>
            <person name="Quiles M."/>
            <person name="Madan Babu M."/>
            <person name="Saito T."/>
            <person name="Buchrieser C."/>
            <person name="Wardroper A."/>
            <person name="Felder M."/>
            <person name="Thangavelu M."/>
            <person name="Johnson D."/>
            <person name="Knights A."/>
            <person name="Loulseged H."/>
            <person name="Mungall K.L."/>
            <person name="Oliver K."/>
            <person name="Price C."/>
            <person name="Quail M.A."/>
            <person name="Urushihara H."/>
            <person name="Hernandez J."/>
            <person name="Rabbinowitsch E."/>
            <person name="Steffen D."/>
            <person name="Sanders M."/>
            <person name="Ma J."/>
            <person name="Kohara Y."/>
            <person name="Sharp S."/>
            <person name="Simmonds M.N."/>
            <person name="Spiegler S."/>
            <person name="Tivey A."/>
            <person name="Sugano S."/>
            <person name="White B."/>
            <person name="Walker D."/>
            <person name="Woodward J.R."/>
            <person name="Winckler T."/>
            <person name="Tanaka Y."/>
            <person name="Shaulsky G."/>
            <person name="Schleicher M."/>
            <person name="Weinstock G.M."/>
            <person name="Rosenthal A."/>
            <person name="Cox E.C."/>
            <person name="Chisholm R.L."/>
            <person name="Gibbs R.A."/>
            <person name="Loomis W.F."/>
            <person name="Platzer M."/>
            <person name="Kay R.R."/>
            <person name="Williams J.G."/>
            <person name="Dear P.H."/>
            <person name="Noegel A.A."/>
            <person name="Barrell B.G."/>
            <person name="Kuspa A."/>
        </authorList>
    </citation>
    <scope>NUCLEOTIDE SEQUENCE [LARGE SCALE GENOMIC DNA]</scope>
    <source>
        <strain>AX4</strain>
    </source>
</reference>
<organism>
    <name type="scientific">Dictyostelium discoideum</name>
    <name type="common">Social amoeba</name>
    <dbReference type="NCBI Taxonomy" id="44689"/>
    <lineage>
        <taxon>Eukaryota</taxon>
        <taxon>Amoebozoa</taxon>
        <taxon>Evosea</taxon>
        <taxon>Eumycetozoa</taxon>
        <taxon>Dictyostelia</taxon>
        <taxon>Dictyosteliales</taxon>
        <taxon>Dictyosteliaceae</taxon>
        <taxon>Dictyostelium</taxon>
    </lineage>
</organism>
<accession>Q54J88</accession>
<protein>
    <recommendedName>
        <fullName>MMS19 nucleotide excision repair protein homolog</fullName>
    </recommendedName>
    <alternativeName>
        <fullName>MMS19-like protein</fullName>
    </alternativeName>
</protein>
<name>MMS19_DICDI</name>
<gene>
    <name type="primary">mms19</name>
    <name type="ORF">DDB_G0288217</name>
</gene>